<name>RSMG_MYCTO</name>
<evidence type="ECO:0000255" key="1">
    <source>
        <dbReference type="HAMAP-Rule" id="MF_00074"/>
    </source>
</evidence>
<dbReference type="EC" id="2.1.1.-" evidence="1"/>
<dbReference type="EMBL" id="AE000516">
    <property type="protein sequence ID" value="AAK48404.1"/>
    <property type="molecule type" value="Genomic_DNA"/>
</dbReference>
<dbReference type="PIR" id="G70851">
    <property type="entry name" value="G70851"/>
</dbReference>
<dbReference type="RefSeq" id="WP_003899763.1">
    <property type="nucleotide sequence ID" value="NZ_KK341228.1"/>
</dbReference>
<dbReference type="SMR" id="P9WGW8"/>
<dbReference type="GeneID" id="45427919"/>
<dbReference type="KEGG" id="mtc:MT4038"/>
<dbReference type="PATRIC" id="fig|83331.31.peg.4344"/>
<dbReference type="HOGENOM" id="CLU_065341_5_0_11"/>
<dbReference type="Proteomes" id="UP000001020">
    <property type="component" value="Chromosome"/>
</dbReference>
<dbReference type="GO" id="GO:0005829">
    <property type="term" value="C:cytosol"/>
    <property type="evidence" value="ECO:0007669"/>
    <property type="project" value="TreeGrafter"/>
</dbReference>
<dbReference type="GO" id="GO:0070043">
    <property type="term" value="F:rRNA (guanine-N7-)-methyltransferase activity"/>
    <property type="evidence" value="ECO:0007669"/>
    <property type="project" value="UniProtKB-UniRule"/>
</dbReference>
<dbReference type="FunFam" id="3.40.50.150:FF:000117">
    <property type="entry name" value="Ribosomal RNA small subunit methyltransferase G"/>
    <property type="match status" value="1"/>
</dbReference>
<dbReference type="Gene3D" id="3.40.50.150">
    <property type="entry name" value="Vaccinia Virus protein VP39"/>
    <property type="match status" value="1"/>
</dbReference>
<dbReference type="HAMAP" id="MF_00074">
    <property type="entry name" value="16SrRNA_methyltr_G"/>
    <property type="match status" value="1"/>
</dbReference>
<dbReference type="InterPro" id="IPR003682">
    <property type="entry name" value="rRNA_ssu_MeTfrase_G"/>
</dbReference>
<dbReference type="InterPro" id="IPR029063">
    <property type="entry name" value="SAM-dependent_MTases_sf"/>
</dbReference>
<dbReference type="NCBIfam" id="TIGR00138">
    <property type="entry name" value="rsmG_gidB"/>
    <property type="match status" value="1"/>
</dbReference>
<dbReference type="PANTHER" id="PTHR31760">
    <property type="entry name" value="S-ADENOSYL-L-METHIONINE-DEPENDENT METHYLTRANSFERASES SUPERFAMILY PROTEIN"/>
    <property type="match status" value="1"/>
</dbReference>
<dbReference type="PANTHER" id="PTHR31760:SF0">
    <property type="entry name" value="S-ADENOSYL-L-METHIONINE-DEPENDENT METHYLTRANSFERASES SUPERFAMILY PROTEIN"/>
    <property type="match status" value="1"/>
</dbReference>
<dbReference type="Pfam" id="PF02527">
    <property type="entry name" value="GidB"/>
    <property type="match status" value="1"/>
</dbReference>
<dbReference type="PIRSF" id="PIRSF003078">
    <property type="entry name" value="GidB"/>
    <property type="match status" value="1"/>
</dbReference>
<dbReference type="SUPFAM" id="SSF53335">
    <property type="entry name" value="S-adenosyl-L-methionine-dependent methyltransferases"/>
    <property type="match status" value="1"/>
</dbReference>
<organism>
    <name type="scientific">Mycobacterium tuberculosis (strain CDC 1551 / Oshkosh)</name>
    <dbReference type="NCBI Taxonomy" id="83331"/>
    <lineage>
        <taxon>Bacteria</taxon>
        <taxon>Bacillati</taxon>
        <taxon>Actinomycetota</taxon>
        <taxon>Actinomycetes</taxon>
        <taxon>Mycobacteriales</taxon>
        <taxon>Mycobacteriaceae</taxon>
        <taxon>Mycobacterium</taxon>
        <taxon>Mycobacterium tuberculosis complex</taxon>
    </lineage>
</organism>
<proteinExistence type="inferred from homology"/>
<sequence length="224" mass="24032">MSPIEPAASAIFGPRLGLARRYAEALAGPGVERGLVGPREVGRLWDRHLLNCAVIGELLERGDRVVDIGSGAGLPGVPLAIARPDLQVVLLEPLLRRTEFLREMVTDLGVAVEIVRGRAEESWVQDQLGGSDAAVSRAVAALDKLTKWSMPLIRPNGRMLAIKGERAHDEVREHRRVMIASGAVDVRVVTCGANYLRPPATVVFARRGKQIARGSARMASGGTA</sequence>
<feature type="chain" id="PRO_0000428289" description="Ribosomal RNA small subunit methyltransferase G">
    <location>
        <begin position="1"/>
        <end position="224"/>
    </location>
</feature>
<feature type="binding site" evidence="1">
    <location>
        <position position="69"/>
    </location>
    <ligand>
        <name>S-adenosyl-L-methionine</name>
        <dbReference type="ChEBI" id="CHEBI:59789"/>
    </ligand>
</feature>
<feature type="binding site" evidence="1">
    <location>
        <position position="74"/>
    </location>
    <ligand>
        <name>S-adenosyl-L-methionine</name>
        <dbReference type="ChEBI" id="CHEBI:59789"/>
    </ligand>
</feature>
<feature type="binding site" evidence="1">
    <location>
        <begin position="119"/>
        <end position="120"/>
    </location>
    <ligand>
        <name>S-adenosyl-L-methionine</name>
        <dbReference type="ChEBI" id="CHEBI:59789"/>
    </ligand>
</feature>
<feature type="binding site" evidence="1">
    <location>
        <position position="137"/>
    </location>
    <ligand>
        <name>S-adenosyl-L-methionine</name>
        <dbReference type="ChEBI" id="CHEBI:59789"/>
    </ligand>
</feature>
<reference key="1">
    <citation type="journal article" date="2002" name="J. Bacteriol.">
        <title>Whole-genome comparison of Mycobacterium tuberculosis clinical and laboratory strains.</title>
        <authorList>
            <person name="Fleischmann R.D."/>
            <person name="Alland D."/>
            <person name="Eisen J.A."/>
            <person name="Carpenter L."/>
            <person name="White O."/>
            <person name="Peterson J.D."/>
            <person name="DeBoy R.T."/>
            <person name="Dodson R.J."/>
            <person name="Gwinn M.L."/>
            <person name="Haft D.H."/>
            <person name="Hickey E.K."/>
            <person name="Kolonay J.F."/>
            <person name="Nelson W.C."/>
            <person name="Umayam L.A."/>
            <person name="Ermolaeva M.D."/>
            <person name="Salzberg S.L."/>
            <person name="Delcher A."/>
            <person name="Utterback T.R."/>
            <person name="Weidman J.F."/>
            <person name="Khouri H.M."/>
            <person name="Gill J."/>
            <person name="Mikula A."/>
            <person name="Bishai W."/>
            <person name="Jacobs W.R. Jr."/>
            <person name="Venter J.C."/>
            <person name="Fraser C.M."/>
        </authorList>
    </citation>
    <scope>NUCLEOTIDE SEQUENCE [LARGE SCALE GENOMIC DNA]</scope>
    <source>
        <strain>CDC 1551 / Oshkosh</strain>
    </source>
</reference>
<protein>
    <recommendedName>
        <fullName evidence="1">Ribosomal RNA small subunit methyltransferase G</fullName>
        <ecNumber evidence="1">2.1.1.-</ecNumber>
    </recommendedName>
    <alternativeName>
        <fullName evidence="1">16S rRNA 7-methylguanosine methyltransferase</fullName>
        <shortName evidence="1">16S rRNA m7G methyltransferase</shortName>
    </alternativeName>
    <alternativeName>
        <fullName>Glucose-inhibited division protein B</fullName>
    </alternativeName>
</protein>
<gene>
    <name evidence="1" type="primary">rsmG</name>
    <name type="synonym">gidB</name>
    <name type="ordered locus">MT4038</name>
</gene>
<keyword id="KW-0963">Cytoplasm</keyword>
<keyword id="KW-0489">Methyltransferase</keyword>
<keyword id="KW-1185">Reference proteome</keyword>
<keyword id="KW-0698">rRNA processing</keyword>
<keyword id="KW-0949">S-adenosyl-L-methionine</keyword>
<keyword id="KW-0808">Transferase</keyword>
<comment type="function">
    <text evidence="1">Specifically methylates the N7 position of guanine in position 518 of 16S rRNA.</text>
</comment>
<comment type="subcellular location">
    <subcellularLocation>
        <location evidence="1">Cytoplasm</location>
    </subcellularLocation>
</comment>
<comment type="similarity">
    <text evidence="1">Belongs to the methyltransferase superfamily. RNA methyltransferase RsmG family.</text>
</comment>
<accession>P9WGW8</accession>
<accession>E7E4Z6</accession>
<accession>O53597</accession>